<evidence type="ECO:0000250" key="1">
    <source>
        <dbReference type="UniProtKB" id="O75940"/>
    </source>
</evidence>
<evidence type="ECO:0000255" key="2"/>
<evidence type="ECO:0000255" key="3">
    <source>
        <dbReference type="PROSITE-ProRule" id="PRU00211"/>
    </source>
</evidence>
<evidence type="ECO:0000303" key="4">
    <source>
    </source>
</evidence>
<evidence type="ECO:0000305" key="5"/>
<comment type="function">
    <text evidence="1">Involved in spliceosome assembly (By similarity).</text>
</comment>
<comment type="subunit">
    <text evidence="1">Associates with spliceosomes. Associates with U4/U5/U6 tri-snRNP and with U2 snRNP (By similarity).</text>
</comment>
<comment type="subcellular location">
    <subcellularLocation>
        <location evidence="1">Nucleus speckle</location>
    </subcellularLocation>
    <subcellularLocation>
        <location evidence="1">Nucleus</location>
        <location evidence="1">Cajal body</location>
    </subcellularLocation>
    <text evidence="1">Detected in nuclear speckles containing snRNP and in Cajal (coiled) bodies.</text>
</comment>
<comment type="alternative products">
    <event type="alternative splicing"/>
    <isoform>
        <id>Q4QQU6-1</id>
        <name>1</name>
        <sequence type="displayed"/>
    </isoform>
    <isoform>
        <id>Q4QQU6-2</id>
        <name>2</name>
        <sequence type="described" ref="VSP_035075"/>
    </isoform>
</comment>
<comment type="domain">
    <text evidence="1">The Tudor domain mediates association with dimethylarginines, which are common in snRNP proteins.</text>
</comment>
<comment type="similarity">
    <text evidence="5">Belongs to the SMN family.</text>
</comment>
<proteinExistence type="evidence at transcript level"/>
<protein>
    <recommendedName>
        <fullName>Survival of motor neuron-related-splicing factor 30</fullName>
    </recommendedName>
    <alternativeName>
        <fullName>Survival motor neuron domain-containing protein 1</fullName>
    </alternativeName>
</protein>
<reference key="1">
    <citation type="journal article" date="2004" name="Genome Res.">
        <title>The status, quality, and expansion of the NIH full-length cDNA project: the Mammalian Gene Collection (MGC).</title>
        <authorList>
            <consortium name="The MGC Project Team"/>
        </authorList>
    </citation>
    <scope>NUCLEOTIDE SEQUENCE [LARGE SCALE MRNA] (ISOFORMS 1 AND 2)</scope>
    <source>
        <tissue>Placenta</tissue>
        <tissue>Thymus</tissue>
    </source>
</reference>
<keyword id="KW-0007">Acetylation</keyword>
<keyword id="KW-0025">Alternative splicing</keyword>
<keyword id="KW-0053">Apoptosis</keyword>
<keyword id="KW-0507">mRNA processing</keyword>
<keyword id="KW-0508">mRNA splicing</keyword>
<keyword id="KW-0539">Nucleus</keyword>
<keyword id="KW-0597">Phosphoprotein</keyword>
<keyword id="KW-1185">Reference proteome</keyword>
<keyword id="KW-0747">Spliceosome</keyword>
<sequence length="238" mass="26783">MSEDLAKQLASYKAQLQQVEAALSGNGENEDLLKLKKDLQEVIELTKDLLSTQPSETLTSSDSFASTQPTHSWKVGDKCMAVWSEDGQCYEAEIEEIDEENGTAAITFAVYGNAEVTPLLNLKPVEEGRKAKEDSGNKPMSKKEMIAQQREYKKKKALKKAQRIKELEQEREDQKVKWQQFNNRAYSKNKKGQVKRSIFASPESVTGKVGVGTCGIADKPMTQYQDTSKYNVRHLMPQ</sequence>
<accession>Q4QQU6</accession>
<accession>Q4KM88</accession>
<gene>
    <name type="primary">Smndc1</name>
    <name type="synonym">Spf30</name>
</gene>
<name>SPF30_RAT</name>
<feature type="chain" id="PRO_0000347224" description="Survival of motor neuron-related-splicing factor 30">
    <location>
        <begin position="1"/>
        <end position="238"/>
    </location>
</feature>
<feature type="domain" description="Tudor" evidence="3">
    <location>
        <begin position="72"/>
        <end position="132"/>
    </location>
</feature>
<feature type="short sequence motif" description="Nuclear localization signal" evidence="2">
    <location>
        <begin position="142"/>
        <end position="160"/>
    </location>
</feature>
<feature type="modified residue" description="Phosphoserine" evidence="1">
    <location>
        <position position="201"/>
    </location>
</feature>
<feature type="modified residue" description="N6-acetyllysine" evidence="1">
    <location>
        <position position="219"/>
    </location>
</feature>
<feature type="splice variant" id="VSP_035075" description="In isoform 2." evidence="4">
    <original>QCYEAEIEEIDEENGTAAITFAVYGNAEVTPLLNLKPVEEGRKAKEDSGNKPMSKKEMIAQQREYKKKKALKKAQRIKELEQEREDQKVKWQQFNNRAYSKNKKGQVKRSIFASPESVTGKVGVGTCGIADKPMTQYQDTSKYNVRHLMPQ</original>
    <variation>HHDIFTGVMRRRSRRSMKRTAPLRSPSLSMAMPK</variation>
    <location>
        <begin position="88"/>
        <end position="238"/>
    </location>
</feature>
<dbReference type="EMBL" id="BC097986">
    <property type="protein sequence ID" value="AAH97986.1"/>
    <property type="molecule type" value="mRNA"/>
</dbReference>
<dbReference type="EMBL" id="BC098697">
    <property type="protein sequence ID" value="AAH98697.1"/>
    <property type="molecule type" value="mRNA"/>
</dbReference>
<dbReference type="RefSeq" id="NP_001020571.1">
    <molecule id="Q4QQU6-1"/>
    <property type="nucleotide sequence ID" value="NM_001025400.3"/>
</dbReference>
<dbReference type="RefSeq" id="NP_001030311.1">
    <molecule id="Q4QQU6-1"/>
    <property type="nucleotide sequence ID" value="NM_001035234.2"/>
</dbReference>
<dbReference type="RefSeq" id="XP_038958730.1">
    <molecule id="Q4QQU6-1"/>
    <property type="nucleotide sequence ID" value="XM_039102802.2"/>
</dbReference>
<dbReference type="BMRB" id="Q4QQU6"/>
<dbReference type="SMR" id="Q4QQU6"/>
<dbReference type="FunCoup" id="Q4QQU6">
    <property type="interactions" value="4371"/>
</dbReference>
<dbReference type="STRING" id="10116.ENSRNOP00000020539"/>
<dbReference type="iPTMnet" id="Q4QQU6"/>
<dbReference type="PhosphoSitePlus" id="Q4QQU6"/>
<dbReference type="jPOST" id="Q4QQU6"/>
<dbReference type="PaxDb" id="10116-ENSRNOP00000020539"/>
<dbReference type="Ensembl" id="ENSRNOT00000020539.8">
    <molecule id="Q4QQU6-1"/>
    <property type="protein sequence ID" value="ENSRNOP00000020539.5"/>
    <property type="gene ID" value="ENSRNOG00000014833.8"/>
</dbReference>
<dbReference type="GeneID" id="287768"/>
<dbReference type="KEGG" id="rno:287768"/>
<dbReference type="AGR" id="RGD:1309151"/>
<dbReference type="CTD" id="10285"/>
<dbReference type="RGD" id="1309151">
    <property type="gene designation" value="Smndc1"/>
</dbReference>
<dbReference type="eggNOG" id="KOG3026">
    <property type="taxonomic scope" value="Eukaryota"/>
</dbReference>
<dbReference type="GeneTree" id="ENSGT00940000153352"/>
<dbReference type="HOGENOM" id="CLU_2037366_0_0_1"/>
<dbReference type="InParanoid" id="Q4QQU6"/>
<dbReference type="PhylomeDB" id="Q4QQU6"/>
<dbReference type="TreeFam" id="TF315413"/>
<dbReference type="Reactome" id="R-RNO-72163">
    <property type="pathway name" value="mRNA Splicing - Major Pathway"/>
</dbReference>
<dbReference type="PRO" id="PR:Q4QQU6"/>
<dbReference type="Proteomes" id="UP000002494">
    <property type="component" value="Chromosome 1"/>
</dbReference>
<dbReference type="Bgee" id="ENSRNOG00000014833">
    <property type="expression patterns" value="Expressed in thymus and 20 other cell types or tissues"/>
</dbReference>
<dbReference type="ExpressionAtlas" id="Q4QQU6">
    <property type="expression patterns" value="baseline and differential"/>
</dbReference>
<dbReference type="GO" id="GO:0015030">
    <property type="term" value="C:Cajal body"/>
    <property type="evidence" value="ECO:0007669"/>
    <property type="project" value="UniProtKB-SubCell"/>
</dbReference>
<dbReference type="GO" id="GO:0005737">
    <property type="term" value="C:cytoplasm"/>
    <property type="evidence" value="ECO:0007669"/>
    <property type="project" value="InterPro"/>
</dbReference>
<dbReference type="GO" id="GO:0016607">
    <property type="term" value="C:nuclear speck"/>
    <property type="evidence" value="ECO:0007669"/>
    <property type="project" value="UniProtKB-SubCell"/>
</dbReference>
<dbReference type="GO" id="GO:0005634">
    <property type="term" value="C:nucleus"/>
    <property type="evidence" value="ECO:0000318"/>
    <property type="project" value="GO_Central"/>
</dbReference>
<dbReference type="GO" id="GO:0005681">
    <property type="term" value="C:spliceosomal complex"/>
    <property type="evidence" value="ECO:0007669"/>
    <property type="project" value="UniProtKB-KW"/>
</dbReference>
<dbReference type="GO" id="GO:0003723">
    <property type="term" value="F:RNA binding"/>
    <property type="evidence" value="ECO:0007669"/>
    <property type="project" value="InterPro"/>
</dbReference>
<dbReference type="GO" id="GO:0006915">
    <property type="term" value="P:apoptotic process"/>
    <property type="evidence" value="ECO:0007669"/>
    <property type="project" value="UniProtKB-KW"/>
</dbReference>
<dbReference type="GO" id="GO:0006397">
    <property type="term" value="P:mRNA processing"/>
    <property type="evidence" value="ECO:0007669"/>
    <property type="project" value="UniProtKB-KW"/>
</dbReference>
<dbReference type="GO" id="GO:0008380">
    <property type="term" value="P:RNA splicing"/>
    <property type="evidence" value="ECO:0007669"/>
    <property type="project" value="UniProtKB-KW"/>
</dbReference>
<dbReference type="CDD" id="cd20399">
    <property type="entry name" value="Tudor_SPF30"/>
    <property type="match status" value="1"/>
</dbReference>
<dbReference type="FunFam" id="2.30.30.140:FF:000038">
    <property type="entry name" value="Survival of motor neuron-related-splicing factor 30"/>
    <property type="match status" value="1"/>
</dbReference>
<dbReference type="Gene3D" id="2.30.30.140">
    <property type="match status" value="1"/>
</dbReference>
<dbReference type="InterPro" id="IPR010304">
    <property type="entry name" value="SMN_Tudor"/>
</dbReference>
<dbReference type="InterPro" id="IPR002999">
    <property type="entry name" value="Tudor"/>
</dbReference>
<dbReference type="PANTHER" id="PTHR13681:SF26">
    <property type="entry name" value="SURVIVAL OF MOTOR NEURON-RELATED-SPLICING FACTOR 30"/>
    <property type="match status" value="1"/>
</dbReference>
<dbReference type="PANTHER" id="PTHR13681">
    <property type="entry name" value="SURVIVAL OF MOTOR NEURON-RELATED-SPLICING FACTOR 30-RELATED"/>
    <property type="match status" value="1"/>
</dbReference>
<dbReference type="Pfam" id="PF06003">
    <property type="entry name" value="SMN_Tudor"/>
    <property type="match status" value="1"/>
</dbReference>
<dbReference type="SMART" id="SM00333">
    <property type="entry name" value="TUDOR"/>
    <property type="match status" value="1"/>
</dbReference>
<dbReference type="SUPFAM" id="SSF63748">
    <property type="entry name" value="Tudor/PWWP/MBT"/>
    <property type="match status" value="1"/>
</dbReference>
<dbReference type="PROSITE" id="PS50304">
    <property type="entry name" value="TUDOR"/>
    <property type="match status" value="1"/>
</dbReference>
<organism>
    <name type="scientific">Rattus norvegicus</name>
    <name type="common">Rat</name>
    <dbReference type="NCBI Taxonomy" id="10116"/>
    <lineage>
        <taxon>Eukaryota</taxon>
        <taxon>Metazoa</taxon>
        <taxon>Chordata</taxon>
        <taxon>Craniata</taxon>
        <taxon>Vertebrata</taxon>
        <taxon>Euteleostomi</taxon>
        <taxon>Mammalia</taxon>
        <taxon>Eutheria</taxon>
        <taxon>Euarchontoglires</taxon>
        <taxon>Glires</taxon>
        <taxon>Rodentia</taxon>
        <taxon>Myomorpha</taxon>
        <taxon>Muroidea</taxon>
        <taxon>Muridae</taxon>
        <taxon>Murinae</taxon>
        <taxon>Rattus</taxon>
    </lineage>
</organism>